<proteinExistence type="inferred from homology"/>
<sequence length="188" mass="20962">MTQGIPAVFLDRDGTINIDHGYVHEIDDFQFIDGVIEAMIELKKMGYALVLVTNQSGIARGIFDEEQFLQLTEWMDWSLADRGVDLDGIYYCPHHPDATEEQYKKSCDCRKPQPGMLLDAQRELSIDMTASFMIGDKLEDMQAATLAKIGTKVLVRTGKPVNTEAEQAANLIINSLADLPKAIKGIKK</sequence>
<accession>Q7N8M1</accession>
<evidence type="ECO:0000250" key="1"/>
<evidence type="ECO:0000250" key="2">
    <source>
        <dbReference type="UniProtKB" id="Q7WG29"/>
    </source>
</evidence>
<evidence type="ECO:0000305" key="3"/>
<reference key="1">
    <citation type="journal article" date="2003" name="Nat. Biotechnol.">
        <title>The genome sequence of the entomopathogenic bacterium Photorhabdus luminescens.</title>
        <authorList>
            <person name="Duchaud E."/>
            <person name="Rusniok C."/>
            <person name="Frangeul L."/>
            <person name="Buchrieser C."/>
            <person name="Givaudan A."/>
            <person name="Taourit S."/>
            <person name="Bocs S."/>
            <person name="Boursaux-Eude C."/>
            <person name="Chandler M."/>
            <person name="Charles J.-F."/>
            <person name="Dassa E."/>
            <person name="Derose R."/>
            <person name="Derzelle S."/>
            <person name="Freyssinet G."/>
            <person name="Gaudriault S."/>
            <person name="Medigue C."/>
            <person name="Lanois A."/>
            <person name="Powell K."/>
            <person name="Siguier P."/>
            <person name="Vincent R."/>
            <person name="Wingate V."/>
            <person name="Zouine M."/>
            <person name="Glaser P."/>
            <person name="Boemare N."/>
            <person name="Danchin A."/>
            <person name="Kunst F."/>
        </authorList>
    </citation>
    <scope>NUCLEOTIDE SEQUENCE [LARGE SCALE GENOMIC DNA]</scope>
    <source>
        <strain>DSM 15139 / CIP 105565 / TT01</strain>
    </source>
</reference>
<keyword id="KW-0119">Carbohydrate metabolism</keyword>
<keyword id="KW-0963">Cytoplasm</keyword>
<keyword id="KW-0378">Hydrolase</keyword>
<keyword id="KW-0448">Lipopolysaccharide biosynthesis</keyword>
<keyword id="KW-0479">Metal-binding</keyword>
<keyword id="KW-1185">Reference proteome</keyword>
<keyword id="KW-0862">Zinc</keyword>
<gene>
    <name type="primary">gmhB1</name>
    <name type="ordered locus">plu0698</name>
</gene>
<comment type="function">
    <text evidence="1">Converts the D-glycero-beta-D-manno-heptose 1,7-bisphosphate intermediate into D-glycero-beta-D-manno-heptose 1-phosphate by removing the phosphate group at the C-7 position.</text>
</comment>
<comment type="catalytic activity">
    <reaction>
        <text>D-glycero-beta-D-manno-heptose 1,7-bisphosphate + H2O = D-glycero-beta-D-manno-heptose 1-phosphate + phosphate</text>
        <dbReference type="Rhea" id="RHEA:28518"/>
        <dbReference type="ChEBI" id="CHEBI:15377"/>
        <dbReference type="ChEBI" id="CHEBI:43474"/>
        <dbReference type="ChEBI" id="CHEBI:60208"/>
        <dbReference type="ChEBI" id="CHEBI:61593"/>
        <dbReference type="EC" id="3.1.3.82"/>
    </reaction>
</comment>
<comment type="pathway">
    <text>Nucleotide-sugar biosynthesis; ADP-L-glycero-beta-D-manno-heptose biosynthesis; ADP-L-glycero-beta-D-manno-heptose from D-glycero-beta-D-manno-heptose 7-phosphate: step 2/4.</text>
</comment>
<comment type="pathway">
    <text>Bacterial outer membrane biogenesis; LPS core biosynthesis.</text>
</comment>
<comment type="subcellular location">
    <subcellularLocation>
        <location evidence="1">Cytoplasm</location>
    </subcellularLocation>
</comment>
<comment type="similarity">
    <text evidence="3">Belongs to the GmhB family.</text>
</comment>
<protein>
    <recommendedName>
        <fullName>D-glycero-beta-D-manno-heptose-1,7-bisphosphate 7-phosphatase</fullName>
        <ecNumber>3.1.3.82</ecNumber>
    </recommendedName>
    <alternativeName>
        <fullName>D,D-heptose 1,7-bisphosphate phosphatase</fullName>
        <shortName>HBP phosphatase</shortName>
    </alternativeName>
</protein>
<name>GMHBB_PHOLL</name>
<organism>
    <name type="scientific">Photorhabdus laumondii subsp. laumondii (strain DSM 15139 / CIP 105565 / TT01)</name>
    <name type="common">Photorhabdus luminescens subsp. laumondii</name>
    <dbReference type="NCBI Taxonomy" id="243265"/>
    <lineage>
        <taxon>Bacteria</taxon>
        <taxon>Pseudomonadati</taxon>
        <taxon>Pseudomonadota</taxon>
        <taxon>Gammaproteobacteria</taxon>
        <taxon>Enterobacterales</taxon>
        <taxon>Morganellaceae</taxon>
        <taxon>Photorhabdus</taxon>
    </lineage>
</organism>
<dbReference type="EC" id="3.1.3.82"/>
<dbReference type="EMBL" id="BX571861">
    <property type="protein sequence ID" value="CAE12993.1"/>
    <property type="molecule type" value="Genomic_DNA"/>
</dbReference>
<dbReference type="RefSeq" id="WP_011145074.1">
    <property type="nucleotide sequence ID" value="NC_005126.1"/>
</dbReference>
<dbReference type="SMR" id="Q7N8M1"/>
<dbReference type="STRING" id="243265.plu0698"/>
<dbReference type="GeneID" id="48846987"/>
<dbReference type="KEGG" id="plu:plu0698"/>
<dbReference type="eggNOG" id="COG0241">
    <property type="taxonomic scope" value="Bacteria"/>
</dbReference>
<dbReference type="HOGENOM" id="CLU_085077_3_0_6"/>
<dbReference type="OrthoDB" id="9781367at2"/>
<dbReference type="UniPathway" id="UPA00356">
    <property type="reaction ID" value="UER00438"/>
</dbReference>
<dbReference type="UniPathway" id="UPA00958"/>
<dbReference type="Proteomes" id="UP000002514">
    <property type="component" value="Chromosome"/>
</dbReference>
<dbReference type="GO" id="GO:0005737">
    <property type="term" value="C:cytoplasm"/>
    <property type="evidence" value="ECO:0007669"/>
    <property type="project" value="UniProtKB-SubCell"/>
</dbReference>
<dbReference type="GO" id="GO:0034200">
    <property type="term" value="F:D-glycero-beta-D-manno-heptose 1,7-bisphosphate 7-phosphatase activity"/>
    <property type="evidence" value="ECO:0007669"/>
    <property type="project" value="UniProtKB-EC"/>
</dbReference>
<dbReference type="GO" id="GO:0046872">
    <property type="term" value="F:metal ion binding"/>
    <property type="evidence" value="ECO:0007669"/>
    <property type="project" value="UniProtKB-KW"/>
</dbReference>
<dbReference type="GO" id="GO:0097171">
    <property type="term" value="P:ADP-L-glycero-beta-D-manno-heptose biosynthetic process"/>
    <property type="evidence" value="ECO:0007669"/>
    <property type="project" value="UniProtKB-UniPathway"/>
</dbReference>
<dbReference type="GO" id="GO:0009244">
    <property type="term" value="P:lipopolysaccharide core region biosynthetic process"/>
    <property type="evidence" value="ECO:0007669"/>
    <property type="project" value="UniProtKB-UniPathway"/>
</dbReference>
<dbReference type="CDD" id="cd07503">
    <property type="entry name" value="HAD_HisB-N"/>
    <property type="match status" value="1"/>
</dbReference>
<dbReference type="FunFam" id="3.40.50.1000:FF:000037">
    <property type="entry name" value="D,D-heptose 1,7-bisphosphate phosphatase"/>
    <property type="match status" value="1"/>
</dbReference>
<dbReference type="Gene3D" id="3.40.50.1000">
    <property type="entry name" value="HAD superfamily/HAD-like"/>
    <property type="match status" value="1"/>
</dbReference>
<dbReference type="InterPro" id="IPR036412">
    <property type="entry name" value="HAD-like_sf"/>
</dbReference>
<dbReference type="InterPro" id="IPR006549">
    <property type="entry name" value="HAD-SF_hydro_IIIA"/>
</dbReference>
<dbReference type="InterPro" id="IPR023214">
    <property type="entry name" value="HAD_sf"/>
</dbReference>
<dbReference type="InterPro" id="IPR004446">
    <property type="entry name" value="Heptose_bisP_phosphatase"/>
</dbReference>
<dbReference type="InterPro" id="IPR006543">
    <property type="entry name" value="Histidinol-phos"/>
</dbReference>
<dbReference type="NCBIfam" id="TIGR00213">
    <property type="entry name" value="GmhB_yaeD"/>
    <property type="match status" value="1"/>
</dbReference>
<dbReference type="NCBIfam" id="TIGR01662">
    <property type="entry name" value="HAD-SF-IIIA"/>
    <property type="match status" value="1"/>
</dbReference>
<dbReference type="NCBIfam" id="TIGR01656">
    <property type="entry name" value="Histidinol-ppas"/>
    <property type="match status" value="1"/>
</dbReference>
<dbReference type="NCBIfam" id="NF006506">
    <property type="entry name" value="PRK08942.1"/>
    <property type="match status" value="1"/>
</dbReference>
<dbReference type="PANTHER" id="PTHR42891">
    <property type="entry name" value="D-GLYCERO-BETA-D-MANNO-HEPTOSE-1,7-BISPHOSPHATE 7-PHOSPHATASE"/>
    <property type="match status" value="1"/>
</dbReference>
<dbReference type="PANTHER" id="PTHR42891:SF1">
    <property type="entry name" value="D-GLYCERO-BETA-D-MANNO-HEPTOSE-1,7-BISPHOSPHATE 7-PHOSPHATASE"/>
    <property type="match status" value="1"/>
</dbReference>
<dbReference type="Pfam" id="PF13242">
    <property type="entry name" value="Hydrolase_like"/>
    <property type="match status" value="1"/>
</dbReference>
<dbReference type="PIRSF" id="PIRSF004682">
    <property type="entry name" value="GmhB"/>
    <property type="match status" value="1"/>
</dbReference>
<dbReference type="SUPFAM" id="SSF56784">
    <property type="entry name" value="HAD-like"/>
    <property type="match status" value="1"/>
</dbReference>
<feature type="chain" id="PRO_0000209401" description="D-glycero-beta-D-manno-heptose-1,7-bisphosphate 7-phosphatase">
    <location>
        <begin position="1"/>
        <end position="188"/>
    </location>
</feature>
<feature type="binding site" evidence="2">
    <location>
        <position position="92"/>
    </location>
    <ligand>
        <name>Zn(2+)</name>
        <dbReference type="ChEBI" id="CHEBI:29105"/>
    </ligand>
</feature>
<feature type="binding site" evidence="2">
    <location>
        <position position="94"/>
    </location>
    <ligand>
        <name>Zn(2+)</name>
        <dbReference type="ChEBI" id="CHEBI:29105"/>
    </ligand>
</feature>
<feature type="binding site" evidence="2">
    <location>
        <position position="107"/>
    </location>
    <ligand>
        <name>Zn(2+)</name>
        <dbReference type="ChEBI" id="CHEBI:29105"/>
    </ligand>
</feature>
<feature type="binding site" evidence="2">
    <location>
        <position position="109"/>
    </location>
    <ligand>
        <name>Zn(2+)</name>
        <dbReference type="ChEBI" id="CHEBI:29105"/>
    </ligand>
</feature>